<proteinExistence type="inferred from homology"/>
<reference key="1">
    <citation type="journal article" date="2007" name="J. Bacteriol.">
        <title>The genome sequence of avian pathogenic Escherichia coli strain O1:K1:H7 shares strong similarities with human extraintestinal pathogenic E. coli genomes.</title>
        <authorList>
            <person name="Johnson T.J."/>
            <person name="Kariyawasam S."/>
            <person name="Wannemuehler Y."/>
            <person name="Mangiamele P."/>
            <person name="Johnson S.J."/>
            <person name="Doetkott C."/>
            <person name="Skyberg J.A."/>
            <person name="Lynne A.M."/>
            <person name="Johnson J.R."/>
            <person name="Nolan L.K."/>
        </authorList>
    </citation>
    <scope>NUCLEOTIDE SEQUENCE [LARGE SCALE GENOMIC DNA]</scope>
</reference>
<evidence type="ECO:0000255" key="1">
    <source>
        <dbReference type="HAMAP-Rule" id="MF_00001"/>
    </source>
</evidence>
<accession>A1AJF0</accession>
<comment type="function">
    <text evidence="1">Catalyzes the condensation of carbamoyl phosphate and aspartate to form carbamoyl aspartate and inorganic phosphate, the committed step in the de novo pyrimidine nucleotide biosynthesis pathway.</text>
</comment>
<comment type="catalytic activity">
    <reaction evidence="1">
        <text>carbamoyl phosphate + L-aspartate = N-carbamoyl-L-aspartate + phosphate + H(+)</text>
        <dbReference type="Rhea" id="RHEA:20013"/>
        <dbReference type="ChEBI" id="CHEBI:15378"/>
        <dbReference type="ChEBI" id="CHEBI:29991"/>
        <dbReference type="ChEBI" id="CHEBI:32814"/>
        <dbReference type="ChEBI" id="CHEBI:43474"/>
        <dbReference type="ChEBI" id="CHEBI:58228"/>
        <dbReference type="EC" id="2.1.3.2"/>
    </reaction>
</comment>
<comment type="pathway">
    <text evidence="1">Pyrimidine metabolism; UMP biosynthesis via de novo pathway; (S)-dihydroorotate from bicarbonate: step 2/3.</text>
</comment>
<comment type="subunit">
    <text evidence="1">Heterododecamer (2C3:3R2) of six catalytic PyrB chains organized as two trimers (C3), and six regulatory PyrI chains organized as three dimers (R2).</text>
</comment>
<comment type="similarity">
    <text evidence="1">Belongs to the aspartate/ornithine carbamoyltransferase superfamily. ATCase family.</text>
</comment>
<feature type="chain" id="PRO_0000301573" description="Aspartate carbamoyltransferase catalytic subunit">
    <location>
        <begin position="1"/>
        <end position="311"/>
    </location>
</feature>
<feature type="binding site" evidence="1">
    <location>
        <position position="55"/>
    </location>
    <ligand>
        <name>carbamoyl phosphate</name>
        <dbReference type="ChEBI" id="CHEBI:58228"/>
    </ligand>
</feature>
<feature type="binding site" evidence="1">
    <location>
        <position position="56"/>
    </location>
    <ligand>
        <name>carbamoyl phosphate</name>
        <dbReference type="ChEBI" id="CHEBI:58228"/>
    </ligand>
</feature>
<feature type="binding site" evidence="1">
    <location>
        <position position="85"/>
    </location>
    <ligand>
        <name>L-aspartate</name>
        <dbReference type="ChEBI" id="CHEBI:29991"/>
    </ligand>
</feature>
<feature type="binding site" evidence="1">
    <location>
        <position position="106"/>
    </location>
    <ligand>
        <name>carbamoyl phosphate</name>
        <dbReference type="ChEBI" id="CHEBI:58228"/>
    </ligand>
</feature>
<feature type="binding site" evidence="1">
    <location>
        <position position="135"/>
    </location>
    <ligand>
        <name>carbamoyl phosphate</name>
        <dbReference type="ChEBI" id="CHEBI:58228"/>
    </ligand>
</feature>
<feature type="binding site" evidence="1">
    <location>
        <position position="138"/>
    </location>
    <ligand>
        <name>carbamoyl phosphate</name>
        <dbReference type="ChEBI" id="CHEBI:58228"/>
    </ligand>
</feature>
<feature type="binding site" evidence="1">
    <location>
        <position position="168"/>
    </location>
    <ligand>
        <name>L-aspartate</name>
        <dbReference type="ChEBI" id="CHEBI:29991"/>
    </ligand>
</feature>
<feature type="binding site" evidence="1">
    <location>
        <position position="230"/>
    </location>
    <ligand>
        <name>L-aspartate</name>
        <dbReference type="ChEBI" id="CHEBI:29991"/>
    </ligand>
</feature>
<feature type="binding site" evidence="1">
    <location>
        <position position="268"/>
    </location>
    <ligand>
        <name>carbamoyl phosphate</name>
        <dbReference type="ChEBI" id="CHEBI:58228"/>
    </ligand>
</feature>
<feature type="binding site" evidence="1">
    <location>
        <position position="269"/>
    </location>
    <ligand>
        <name>carbamoyl phosphate</name>
        <dbReference type="ChEBI" id="CHEBI:58228"/>
    </ligand>
</feature>
<dbReference type="EC" id="2.1.3.2" evidence="1"/>
<dbReference type="EMBL" id="CP000468">
    <property type="protein sequence ID" value="ABJ03790.1"/>
    <property type="molecule type" value="Genomic_DNA"/>
</dbReference>
<dbReference type="RefSeq" id="WP_000013046.1">
    <property type="nucleotide sequence ID" value="NZ_CADILS010000031.1"/>
</dbReference>
<dbReference type="BMRB" id="A1AJF0"/>
<dbReference type="SMR" id="A1AJF0"/>
<dbReference type="GeneID" id="93777579"/>
<dbReference type="KEGG" id="ecv:APECO1_2147"/>
<dbReference type="HOGENOM" id="CLU_043846_1_2_6"/>
<dbReference type="UniPathway" id="UPA00070">
    <property type="reaction ID" value="UER00116"/>
</dbReference>
<dbReference type="Proteomes" id="UP000008216">
    <property type="component" value="Chromosome"/>
</dbReference>
<dbReference type="GO" id="GO:0005829">
    <property type="term" value="C:cytosol"/>
    <property type="evidence" value="ECO:0007669"/>
    <property type="project" value="TreeGrafter"/>
</dbReference>
<dbReference type="GO" id="GO:0016597">
    <property type="term" value="F:amino acid binding"/>
    <property type="evidence" value="ECO:0007669"/>
    <property type="project" value="InterPro"/>
</dbReference>
<dbReference type="GO" id="GO:0004070">
    <property type="term" value="F:aspartate carbamoyltransferase activity"/>
    <property type="evidence" value="ECO:0007669"/>
    <property type="project" value="UniProtKB-UniRule"/>
</dbReference>
<dbReference type="GO" id="GO:0006207">
    <property type="term" value="P:'de novo' pyrimidine nucleobase biosynthetic process"/>
    <property type="evidence" value="ECO:0007669"/>
    <property type="project" value="InterPro"/>
</dbReference>
<dbReference type="GO" id="GO:0044205">
    <property type="term" value="P:'de novo' UMP biosynthetic process"/>
    <property type="evidence" value="ECO:0007669"/>
    <property type="project" value="UniProtKB-UniRule"/>
</dbReference>
<dbReference type="GO" id="GO:0006520">
    <property type="term" value="P:amino acid metabolic process"/>
    <property type="evidence" value="ECO:0007669"/>
    <property type="project" value="InterPro"/>
</dbReference>
<dbReference type="FunFam" id="3.40.50.1370:FF:000001">
    <property type="entry name" value="Aspartate carbamoyltransferase"/>
    <property type="match status" value="1"/>
</dbReference>
<dbReference type="FunFam" id="3.40.50.1370:FF:000002">
    <property type="entry name" value="Aspartate carbamoyltransferase 2"/>
    <property type="match status" value="1"/>
</dbReference>
<dbReference type="Gene3D" id="3.40.50.1370">
    <property type="entry name" value="Aspartate/ornithine carbamoyltransferase"/>
    <property type="match status" value="2"/>
</dbReference>
<dbReference type="HAMAP" id="MF_00001">
    <property type="entry name" value="Asp_carb_tr"/>
    <property type="match status" value="1"/>
</dbReference>
<dbReference type="InterPro" id="IPR006132">
    <property type="entry name" value="Asp/Orn_carbamoyltranf_P-bd"/>
</dbReference>
<dbReference type="InterPro" id="IPR006130">
    <property type="entry name" value="Asp/Orn_carbamoylTrfase"/>
</dbReference>
<dbReference type="InterPro" id="IPR036901">
    <property type="entry name" value="Asp/Orn_carbamoylTrfase_sf"/>
</dbReference>
<dbReference type="InterPro" id="IPR002082">
    <property type="entry name" value="Asp_carbamoyltransf"/>
</dbReference>
<dbReference type="InterPro" id="IPR006131">
    <property type="entry name" value="Asp_carbamoyltransf_Asp/Orn-bd"/>
</dbReference>
<dbReference type="NCBIfam" id="TIGR00670">
    <property type="entry name" value="asp_carb_tr"/>
    <property type="match status" value="1"/>
</dbReference>
<dbReference type="NCBIfam" id="NF002032">
    <property type="entry name" value="PRK00856.1"/>
    <property type="match status" value="1"/>
</dbReference>
<dbReference type="PANTHER" id="PTHR45753:SF6">
    <property type="entry name" value="ASPARTATE CARBAMOYLTRANSFERASE"/>
    <property type="match status" value="1"/>
</dbReference>
<dbReference type="PANTHER" id="PTHR45753">
    <property type="entry name" value="ORNITHINE CARBAMOYLTRANSFERASE, MITOCHONDRIAL"/>
    <property type="match status" value="1"/>
</dbReference>
<dbReference type="Pfam" id="PF00185">
    <property type="entry name" value="OTCace"/>
    <property type="match status" value="1"/>
</dbReference>
<dbReference type="Pfam" id="PF02729">
    <property type="entry name" value="OTCace_N"/>
    <property type="match status" value="1"/>
</dbReference>
<dbReference type="PRINTS" id="PR00100">
    <property type="entry name" value="AOTCASE"/>
</dbReference>
<dbReference type="PRINTS" id="PR00101">
    <property type="entry name" value="ATCASE"/>
</dbReference>
<dbReference type="SUPFAM" id="SSF53671">
    <property type="entry name" value="Aspartate/ornithine carbamoyltransferase"/>
    <property type="match status" value="1"/>
</dbReference>
<dbReference type="PROSITE" id="PS00097">
    <property type="entry name" value="CARBAMOYLTRANSFERASE"/>
    <property type="match status" value="1"/>
</dbReference>
<name>PYRB_ECOK1</name>
<gene>
    <name evidence="1" type="primary">pyrB</name>
    <name type="ordered locus">Ecok1_42960</name>
    <name type="ORF">APECO1_2147</name>
</gene>
<sequence length="311" mass="34427">MANPLYQKHIISINDLSRDDLNLVLATAAKLKANPQPELLKHKVIASCFFEASTRTRLSFETSMHRLGASVVGFSDSANTSLGKKGETLADTISVISTYVDAIVMRHPQEGAARLATEFSGNVPVLNAGDGSNQHPTQTLLDLFTIQETQGRLDNLHVAMVGDLKYGRTVHSLTQALAKFDGNRFYFIAPDALAMPQYILDMLDEKGIAWSLHSSIEEVMAEVDILYMTRVQKERLDPSEYANVKAQFVLRASDLHNAKANMKVLHPLPRVDEIATDVDKTPHAWYFQQAGNGIFARQALLALVLNRDLVL</sequence>
<keyword id="KW-0665">Pyrimidine biosynthesis</keyword>
<keyword id="KW-1185">Reference proteome</keyword>
<keyword id="KW-0808">Transferase</keyword>
<protein>
    <recommendedName>
        <fullName evidence="1">Aspartate carbamoyltransferase catalytic subunit</fullName>
        <ecNumber evidence="1">2.1.3.2</ecNumber>
    </recommendedName>
    <alternativeName>
        <fullName evidence="1">Aspartate transcarbamylase</fullName>
        <shortName evidence="1">ATCase</shortName>
    </alternativeName>
</protein>
<organism>
    <name type="scientific">Escherichia coli O1:K1 / APEC</name>
    <dbReference type="NCBI Taxonomy" id="405955"/>
    <lineage>
        <taxon>Bacteria</taxon>
        <taxon>Pseudomonadati</taxon>
        <taxon>Pseudomonadota</taxon>
        <taxon>Gammaproteobacteria</taxon>
        <taxon>Enterobacterales</taxon>
        <taxon>Enterobacteriaceae</taxon>
        <taxon>Escherichia</taxon>
    </lineage>
</organism>